<reference key="1">
    <citation type="journal article" date="2000" name="Science">
        <title>The genome sequence of Drosophila melanogaster.</title>
        <authorList>
            <person name="Adams M.D."/>
            <person name="Celniker S.E."/>
            <person name="Holt R.A."/>
            <person name="Evans C.A."/>
            <person name="Gocayne J.D."/>
            <person name="Amanatides P.G."/>
            <person name="Scherer S.E."/>
            <person name="Li P.W."/>
            <person name="Hoskins R.A."/>
            <person name="Galle R.F."/>
            <person name="George R.A."/>
            <person name="Lewis S.E."/>
            <person name="Richards S."/>
            <person name="Ashburner M."/>
            <person name="Henderson S.N."/>
            <person name="Sutton G.G."/>
            <person name="Wortman J.R."/>
            <person name="Yandell M.D."/>
            <person name="Zhang Q."/>
            <person name="Chen L.X."/>
            <person name="Brandon R.C."/>
            <person name="Rogers Y.-H.C."/>
            <person name="Blazej R.G."/>
            <person name="Champe M."/>
            <person name="Pfeiffer B.D."/>
            <person name="Wan K.H."/>
            <person name="Doyle C."/>
            <person name="Baxter E.G."/>
            <person name="Helt G."/>
            <person name="Nelson C.R."/>
            <person name="Miklos G.L.G."/>
            <person name="Abril J.F."/>
            <person name="Agbayani A."/>
            <person name="An H.-J."/>
            <person name="Andrews-Pfannkoch C."/>
            <person name="Baldwin D."/>
            <person name="Ballew R.M."/>
            <person name="Basu A."/>
            <person name="Baxendale J."/>
            <person name="Bayraktaroglu L."/>
            <person name="Beasley E.M."/>
            <person name="Beeson K.Y."/>
            <person name="Benos P.V."/>
            <person name="Berman B.P."/>
            <person name="Bhandari D."/>
            <person name="Bolshakov S."/>
            <person name="Borkova D."/>
            <person name="Botchan M.R."/>
            <person name="Bouck J."/>
            <person name="Brokstein P."/>
            <person name="Brottier P."/>
            <person name="Burtis K.C."/>
            <person name="Busam D.A."/>
            <person name="Butler H."/>
            <person name="Cadieu E."/>
            <person name="Center A."/>
            <person name="Chandra I."/>
            <person name="Cherry J.M."/>
            <person name="Cawley S."/>
            <person name="Dahlke C."/>
            <person name="Davenport L.B."/>
            <person name="Davies P."/>
            <person name="de Pablos B."/>
            <person name="Delcher A."/>
            <person name="Deng Z."/>
            <person name="Mays A.D."/>
            <person name="Dew I."/>
            <person name="Dietz S.M."/>
            <person name="Dodson K."/>
            <person name="Doup L.E."/>
            <person name="Downes M."/>
            <person name="Dugan-Rocha S."/>
            <person name="Dunkov B.C."/>
            <person name="Dunn P."/>
            <person name="Durbin K.J."/>
            <person name="Evangelista C.C."/>
            <person name="Ferraz C."/>
            <person name="Ferriera S."/>
            <person name="Fleischmann W."/>
            <person name="Fosler C."/>
            <person name="Gabrielian A.E."/>
            <person name="Garg N.S."/>
            <person name="Gelbart W.M."/>
            <person name="Glasser K."/>
            <person name="Glodek A."/>
            <person name="Gong F."/>
            <person name="Gorrell J.H."/>
            <person name="Gu Z."/>
            <person name="Guan P."/>
            <person name="Harris M."/>
            <person name="Harris N.L."/>
            <person name="Harvey D.A."/>
            <person name="Heiman T.J."/>
            <person name="Hernandez J.R."/>
            <person name="Houck J."/>
            <person name="Hostin D."/>
            <person name="Houston K.A."/>
            <person name="Howland T.J."/>
            <person name="Wei M.-H."/>
            <person name="Ibegwam C."/>
            <person name="Jalali M."/>
            <person name="Kalush F."/>
            <person name="Karpen G.H."/>
            <person name="Ke Z."/>
            <person name="Kennison J.A."/>
            <person name="Ketchum K.A."/>
            <person name="Kimmel B.E."/>
            <person name="Kodira C.D."/>
            <person name="Kraft C.L."/>
            <person name="Kravitz S."/>
            <person name="Kulp D."/>
            <person name="Lai Z."/>
            <person name="Lasko P."/>
            <person name="Lei Y."/>
            <person name="Levitsky A.A."/>
            <person name="Li J.H."/>
            <person name="Li Z."/>
            <person name="Liang Y."/>
            <person name="Lin X."/>
            <person name="Liu X."/>
            <person name="Mattei B."/>
            <person name="McIntosh T.C."/>
            <person name="McLeod M.P."/>
            <person name="McPherson D."/>
            <person name="Merkulov G."/>
            <person name="Milshina N.V."/>
            <person name="Mobarry C."/>
            <person name="Morris J."/>
            <person name="Moshrefi A."/>
            <person name="Mount S.M."/>
            <person name="Moy M."/>
            <person name="Murphy B."/>
            <person name="Murphy L."/>
            <person name="Muzny D.M."/>
            <person name="Nelson D.L."/>
            <person name="Nelson D.R."/>
            <person name="Nelson K.A."/>
            <person name="Nixon K."/>
            <person name="Nusskern D.R."/>
            <person name="Pacleb J.M."/>
            <person name="Palazzolo M."/>
            <person name="Pittman G.S."/>
            <person name="Pan S."/>
            <person name="Pollard J."/>
            <person name="Puri V."/>
            <person name="Reese M.G."/>
            <person name="Reinert K."/>
            <person name="Remington K."/>
            <person name="Saunders R.D.C."/>
            <person name="Scheeler F."/>
            <person name="Shen H."/>
            <person name="Shue B.C."/>
            <person name="Siden-Kiamos I."/>
            <person name="Simpson M."/>
            <person name="Skupski M.P."/>
            <person name="Smith T.J."/>
            <person name="Spier E."/>
            <person name="Spradling A.C."/>
            <person name="Stapleton M."/>
            <person name="Strong R."/>
            <person name="Sun E."/>
            <person name="Svirskas R."/>
            <person name="Tector C."/>
            <person name="Turner R."/>
            <person name="Venter E."/>
            <person name="Wang A.H."/>
            <person name="Wang X."/>
            <person name="Wang Z.-Y."/>
            <person name="Wassarman D.A."/>
            <person name="Weinstock G.M."/>
            <person name="Weissenbach J."/>
            <person name="Williams S.M."/>
            <person name="Woodage T."/>
            <person name="Worley K.C."/>
            <person name="Wu D."/>
            <person name="Yang S."/>
            <person name="Yao Q.A."/>
            <person name="Ye J."/>
            <person name="Yeh R.-F."/>
            <person name="Zaveri J.S."/>
            <person name="Zhan M."/>
            <person name="Zhang G."/>
            <person name="Zhao Q."/>
            <person name="Zheng L."/>
            <person name="Zheng X.H."/>
            <person name="Zhong F.N."/>
            <person name="Zhong W."/>
            <person name="Zhou X."/>
            <person name="Zhu S.C."/>
            <person name="Zhu X."/>
            <person name="Smith H.O."/>
            <person name="Gibbs R.A."/>
            <person name="Myers E.W."/>
            <person name="Rubin G.M."/>
            <person name="Venter J.C."/>
        </authorList>
    </citation>
    <scope>NUCLEOTIDE SEQUENCE [LARGE SCALE GENOMIC DNA]</scope>
    <source>
        <strain>Berkeley</strain>
    </source>
</reference>
<reference key="2">
    <citation type="journal article" date="2002" name="Genome Biol.">
        <title>Annotation of the Drosophila melanogaster euchromatic genome: a systematic review.</title>
        <authorList>
            <person name="Misra S."/>
            <person name="Crosby M.A."/>
            <person name="Mungall C.J."/>
            <person name="Matthews B.B."/>
            <person name="Campbell K.S."/>
            <person name="Hradecky P."/>
            <person name="Huang Y."/>
            <person name="Kaminker J.S."/>
            <person name="Millburn G.H."/>
            <person name="Prochnik S.E."/>
            <person name="Smith C.D."/>
            <person name="Tupy J.L."/>
            <person name="Whitfield E.J."/>
            <person name="Bayraktaroglu L."/>
            <person name="Berman B.P."/>
            <person name="Bettencourt B.R."/>
            <person name="Celniker S.E."/>
            <person name="de Grey A.D.N.J."/>
            <person name="Drysdale R.A."/>
            <person name="Harris N.L."/>
            <person name="Richter J."/>
            <person name="Russo S."/>
            <person name="Schroeder A.J."/>
            <person name="Shu S.Q."/>
            <person name="Stapleton M."/>
            <person name="Yamada C."/>
            <person name="Ashburner M."/>
            <person name="Gelbart W.M."/>
            <person name="Rubin G.M."/>
            <person name="Lewis S.E."/>
        </authorList>
    </citation>
    <scope>GENOME REANNOTATION</scope>
    <scope>ALTERNATIVE SPLICING</scope>
    <source>
        <strain>Berkeley</strain>
    </source>
</reference>
<reference key="3">
    <citation type="journal article" date="2002" name="Genome Biol.">
        <title>A Drosophila full-length cDNA resource.</title>
        <authorList>
            <person name="Stapleton M."/>
            <person name="Carlson J.W."/>
            <person name="Brokstein P."/>
            <person name="Yu C."/>
            <person name="Champe M."/>
            <person name="George R.A."/>
            <person name="Guarin H."/>
            <person name="Kronmiller B."/>
            <person name="Pacleb J.M."/>
            <person name="Park S."/>
            <person name="Wan K.H."/>
            <person name="Rubin G.M."/>
            <person name="Celniker S.E."/>
        </authorList>
    </citation>
    <scope>NUCLEOTIDE SEQUENCE [LARGE SCALE MRNA] (ISOFORMS A AND C)</scope>
    <source>
        <strain>Berkeley</strain>
        <tissue>Embryo</tissue>
    </source>
</reference>
<reference key="4">
    <citation type="submission" date="2009-01" db="EMBL/GenBank/DDBJ databases">
        <authorList>
            <person name="Carlson J.W."/>
            <person name="Booth B."/>
            <person name="Frise E."/>
            <person name="Park S."/>
            <person name="Wan K.H."/>
            <person name="Yu C."/>
            <person name="Celniker S.E."/>
        </authorList>
    </citation>
    <scope>NUCLEOTIDE SEQUENCE [LARGE SCALE MRNA] (ISOFORM C)</scope>
    <source>
        <strain>Berkeley</strain>
    </source>
</reference>
<comment type="function">
    <text evidence="1">May be involved in the metabolism of insect hormones and in the breakdown of synthetic insecticides.</text>
</comment>
<comment type="cofactor">
    <cofactor evidence="1">
        <name>heme</name>
        <dbReference type="ChEBI" id="CHEBI:30413"/>
    </cofactor>
</comment>
<comment type="subcellular location">
    <subcellularLocation>
        <location evidence="5">Endoplasmic reticulum membrane</location>
        <topology evidence="5">Peripheral membrane protein</topology>
    </subcellularLocation>
    <subcellularLocation>
        <location evidence="5">Microsome membrane</location>
        <topology evidence="5">Peripheral membrane protein</topology>
    </subcellularLocation>
</comment>
<comment type="alternative products">
    <event type="alternative splicing"/>
    <isoform>
        <id>Q9V5L3-1</id>
        <name>A</name>
        <name>D</name>
        <sequence type="displayed"/>
    </isoform>
    <isoform>
        <id>Q9V5L3-3</id>
        <name>C</name>
        <sequence type="described" ref="VSP_000616 VSP_000617"/>
    </isoform>
</comment>
<comment type="similarity">
    <text evidence="5">Belongs to the cytochrome P450 family.</text>
</comment>
<comment type="sequence caution" evidence="5">
    <conflict type="miscellaneous discrepancy">
        <sequence resource="EMBL-CDS" id="AAM27517"/>
    </conflict>
    <text>Intron retention.</text>
</comment>
<sequence>MSGLRKTSIALMRRSTSSTTILPHSGGVGGAVSPPSSGVGVATEIEKSIAMQRLRTGESSNPKKLNVSQQPVTSVATTRTTASSLPAETTSSPAAAVRPYSEVPGPYPLPLIGNSWRFAPLIGTYKISDLDKVMNELHVNYGKMAKVGGLIGHPDLLFVFDGDEIRNIFKKEEAMPHRPSMPSLRHYKGDLRRDFFGDVAGLIGVHGPKWEAFRQEVQHILLQPQTAKKYIPPLNDIASEFMGRIELMRDEKDELPANFLHELYKWALESVGRVSLDTRLGCLSPEGSEEAQQIIEAINTFFWAVPELELRMPLWRIYPTKAYRSFVKALDQFTAICMKNIGKTMDKADADEARGLSKSEADISIVERIVRKTGNRKLAAILALDLFLVGVDTTSVAASSTIYQLAKNPDKQKKLFDELQKVFPHREADINQNVLEQMPYLRACVKETLRMRPVVIANGRSLQSDAVINGYHVPKGTHVIFPHLVVSNDPAYFPEPKRFLPERWLKQSTDAAGCPHANQKIHPFVSLPFGFGRRMCVGRRFAEIELHTLLAKIFRKYKVSYNSGEFVYRVNSTYIPQSPLNFKLTLRDE</sequence>
<keyword id="KW-0025">Alternative splicing</keyword>
<keyword id="KW-0256">Endoplasmic reticulum</keyword>
<keyword id="KW-0349">Heme</keyword>
<keyword id="KW-0408">Iron</keyword>
<keyword id="KW-0472">Membrane</keyword>
<keyword id="KW-0479">Metal-binding</keyword>
<keyword id="KW-0492">Microsome</keyword>
<keyword id="KW-0503">Monooxygenase</keyword>
<keyword id="KW-0560">Oxidoreductase</keyword>
<keyword id="KW-1185">Reference proteome</keyword>
<accession>Q9V5L3</accession>
<accession>A4UZC2</accession>
<accession>B8A3V2</accession>
<accession>Q8MZH1</accession>
<accession>Q8SY18</accession>
<gene>
    <name type="primary">Cyp49a1</name>
    <name type="ORF">CG18377</name>
</gene>
<evidence type="ECO:0000250" key="1"/>
<evidence type="ECO:0000256" key="2">
    <source>
        <dbReference type="SAM" id="MobiDB-lite"/>
    </source>
</evidence>
<evidence type="ECO:0000303" key="3">
    <source>
    </source>
</evidence>
<evidence type="ECO:0000303" key="4">
    <source ref="4"/>
</evidence>
<evidence type="ECO:0000305" key="5"/>
<feature type="chain" id="PRO_0000051996" description="Probable cytochrome P450 49a1">
    <location>
        <begin position="1"/>
        <end position="589"/>
    </location>
</feature>
<feature type="region of interest" description="Disordered" evidence="2">
    <location>
        <begin position="56"/>
        <end position="90"/>
    </location>
</feature>
<feature type="compositionally biased region" description="Polar residues" evidence="2">
    <location>
        <begin position="57"/>
        <end position="71"/>
    </location>
</feature>
<feature type="compositionally biased region" description="Low complexity" evidence="2">
    <location>
        <begin position="72"/>
        <end position="84"/>
    </location>
</feature>
<feature type="binding site" description="axial binding residue" evidence="1">
    <location>
        <position position="536"/>
    </location>
    <ligand>
        <name>heme</name>
        <dbReference type="ChEBI" id="CHEBI:30413"/>
    </ligand>
    <ligandPart>
        <name>Fe</name>
        <dbReference type="ChEBI" id="CHEBI:18248"/>
    </ligandPart>
</feature>
<feature type="splice variant" id="VSP_000616" description="In isoform C." evidence="3 4">
    <location>
        <begin position="1"/>
        <end position="174"/>
    </location>
</feature>
<feature type="splice variant" id="VSP_000617" description="In isoform C." evidence="3 4">
    <original>MPH</original>
    <variation>MEL</variation>
    <location>
        <begin position="175"/>
        <end position="177"/>
    </location>
</feature>
<feature type="sequence conflict" description="In Ref. 3; AAL68266." evidence="5" ref="3">
    <original>S</original>
    <variation>N</variation>
    <location>
        <position position="461"/>
    </location>
</feature>
<organism>
    <name type="scientific">Drosophila melanogaster</name>
    <name type="common">Fruit fly</name>
    <dbReference type="NCBI Taxonomy" id="7227"/>
    <lineage>
        <taxon>Eukaryota</taxon>
        <taxon>Metazoa</taxon>
        <taxon>Ecdysozoa</taxon>
        <taxon>Arthropoda</taxon>
        <taxon>Hexapoda</taxon>
        <taxon>Insecta</taxon>
        <taxon>Pterygota</taxon>
        <taxon>Neoptera</taxon>
        <taxon>Endopterygota</taxon>
        <taxon>Diptera</taxon>
        <taxon>Brachycera</taxon>
        <taxon>Muscomorpha</taxon>
        <taxon>Ephydroidea</taxon>
        <taxon>Drosophilidae</taxon>
        <taxon>Drosophila</taxon>
        <taxon>Sophophora</taxon>
    </lineage>
</organism>
<proteinExistence type="evidence at transcript level"/>
<protein>
    <recommendedName>
        <fullName>Probable cytochrome P450 49a1</fullName>
        <ecNumber>1.14.-.-</ecNumber>
    </recommendedName>
    <alternativeName>
        <fullName>CYPXLIXA1</fullName>
    </alternativeName>
</protein>
<dbReference type="EC" id="1.14.-.-"/>
<dbReference type="EMBL" id="AE013599">
    <property type="protein sequence ID" value="AAF58791.3"/>
    <property type="molecule type" value="Genomic_DNA"/>
</dbReference>
<dbReference type="EMBL" id="AE013599">
    <property type="protein sequence ID" value="AAF58793.2"/>
    <property type="molecule type" value="Genomic_DNA"/>
</dbReference>
<dbReference type="EMBL" id="AE013599">
    <property type="protein sequence ID" value="AAM68760.2"/>
    <property type="molecule type" value="Genomic_DNA"/>
</dbReference>
<dbReference type="EMBL" id="AY075453">
    <property type="protein sequence ID" value="AAL68266.1"/>
    <property type="molecule type" value="mRNA"/>
</dbReference>
<dbReference type="EMBL" id="AY102688">
    <property type="protein sequence ID" value="AAM27517.1"/>
    <property type="status" value="ALT_SEQ"/>
    <property type="molecule type" value="mRNA"/>
</dbReference>
<dbReference type="EMBL" id="BT056244">
    <property type="protein sequence ID" value="ACL68691.1"/>
    <property type="molecule type" value="mRNA"/>
</dbReference>
<dbReference type="RefSeq" id="NP_001246256.1">
    <molecule id="Q9V5L3-1"/>
    <property type="nucleotide sequence ID" value="NM_001259327.2"/>
</dbReference>
<dbReference type="RefSeq" id="NP_610588.2">
    <molecule id="Q9V5L3-1"/>
    <property type="nucleotide sequence ID" value="NM_136744.4"/>
</dbReference>
<dbReference type="RefSeq" id="NP_724937.1">
    <molecule id="Q9V5L3-3"/>
    <property type="nucleotide sequence ID" value="NM_165774.3"/>
</dbReference>
<dbReference type="RefSeq" id="NP_995803.1">
    <molecule id="Q9V5L3-1"/>
    <property type="nucleotide sequence ID" value="NM_206081.2"/>
</dbReference>
<dbReference type="SMR" id="Q9V5L3"/>
<dbReference type="BioGRID" id="61923">
    <property type="interactions" value="1"/>
</dbReference>
<dbReference type="DIP" id="DIP-22876N"/>
<dbReference type="FunCoup" id="Q9V5L3">
    <property type="interactions" value="31"/>
</dbReference>
<dbReference type="IntAct" id="Q9V5L3">
    <property type="interactions" value="2"/>
</dbReference>
<dbReference type="STRING" id="7227.FBpp0293134"/>
<dbReference type="PaxDb" id="7227-FBpp0087403"/>
<dbReference type="DNASU" id="36105"/>
<dbReference type="EnsemblMetazoa" id="FBtr0088311">
    <molecule id="Q9V5L3-1"/>
    <property type="protein sequence ID" value="FBpp0087403"/>
    <property type="gene ID" value="FBgn0033524"/>
</dbReference>
<dbReference type="EnsemblMetazoa" id="FBtr0088312">
    <molecule id="Q9V5L3-3"/>
    <property type="protein sequence ID" value="FBpp0087404"/>
    <property type="gene ID" value="FBgn0033524"/>
</dbReference>
<dbReference type="EnsemblMetazoa" id="FBtr0088313">
    <molecule id="Q9V5L3-1"/>
    <property type="protein sequence ID" value="FBpp0089308"/>
    <property type="gene ID" value="FBgn0033524"/>
</dbReference>
<dbReference type="EnsemblMetazoa" id="FBtr0304592">
    <molecule id="Q9V5L3-1"/>
    <property type="protein sequence ID" value="FBpp0293134"/>
    <property type="gene ID" value="FBgn0033524"/>
</dbReference>
<dbReference type="GeneID" id="36105"/>
<dbReference type="KEGG" id="dme:Dmel_CG18377"/>
<dbReference type="UCSC" id="CG18377-RA">
    <molecule id="Q9V5L3-1"/>
    <property type="organism name" value="d. melanogaster"/>
</dbReference>
<dbReference type="AGR" id="FB:FBgn0033524"/>
<dbReference type="CTD" id="36105"/>
<dbReference type="FlyBase" id="FBgn0033524">
    <property type="gene designation" value="Cyp49a1"/>
</dbReference>
<dbReference type="VEuPathDB" id="VectorBase:FBgn0033524"/>
<dbReference type="eggNOG" id="KOG0159">
    <property type="taxonomic scope" value="Eukaryota"/>
</dbReference>
<dbReference type="InParanoid" id="Q9V5L3"/>
<dbReference type="OMA" id="FSAICMK"/>
<dbReference type="OrthoDB" id="3945418at2759"/>
<dbReference type="PhylomeDB" id="Q9V5L3"/>
<dbReference type="SignaLink" id="Q9V5L3"/>
<dbReference type="BioGRID-ORCS" id="36105">
    <property type="hits" value="0 hits in 3 CRISPR screens"/>
</dbReference>
<dbReference type="GenomeRNAi" id="36105"/>
<dbReference type="PRO" id="PR:Q9V5L3"/>
<dbReference type="Proteomes" id="UP000000803">
    <property type="component" value="Chromosome 2R"/>
</dbReference>
<dbReference type="Bgee" id="FBgn0033524">
    <property type="expression patterns" value="Expressed in epithelial cell in male reproductive gland and 65 other cell types or tissues"/>
</dbReference>
<dbReference type="ExpressionAtlas" id="Q9V5L3">
    <property type="expression patterns" value="baseline and differential"/>
</dbReference>
<dbReference type="GO" id="GO:0005789">
    <property type="term" value="C:endoplasmic reticulum membrane"/>
    <property type="evidence" value="ECO:0007669"/>
    <property type="project" value="UniProtKB-SubCell"/>
</dbReference>
<dbReference type="GO" id="GO:0020037">
    <property type="term" value="F:heme binding"/>
    <property type="evidence" value="ECO:0007669"/>
    <property type="project" value="InterPro"/>
</dbReference>
<dbReference type="GO" id="GO:0005506">
    <property type="term" value="F:iron ion binding"/>
    <property type="evidence" value="ECO:0007669"/>
    <property type="project" value="InterPro"/>
</dbReference>
<dbReference type="GO" id="GO:0004497">
    <property type="term" value="F:monooxygenase activity"/>
    <property type="evidence" value="ECO:0007669"/>
    <property type="project" value="UniProtKB-KW"/>
</dbReference>
<dbReference type="GO" id="GO:0016705">
    <property type="term" value="F:oxidoreductase activity, acting on paired donors, with incorporation or reduction of molecular oxygen"/>
    <property type="evidence" value="ECO:0007669"/>
    <property type="project" value="InterPro"/>
</dbReference>
<dbReference type="CDD" id="cd11054">
    <property type="entry name" value="CYP24A1-like"/>
    <property type="match status" value="1"/>
</dbReference>
<dbReference type="FunFam" id="1.10.630.10:FF:000006">
    <property type="entry name" value="Cytochrome P450 302a1, mitochondrial"/>
    <property type="match status" value="1"/>
</dbReference>
<dbReference type="Gene3D" id="1.10.630.10">
    <property type="entry name" value="Cytochrome P450"/>
    <property type="match status" value="1"/>
</dbReference>
<dbReference type="InterPro" id="IPR050479">
    <property type="entry name" value="CYP11_CYP27_families"/>
</dbReference>
<dbReference type="InterPro" id="IPR001128">
    <property type="entry name" value="Cyt_P450"/>
</dbReference>
<dbReference type="InterPro" id="IPR017972">
    <property type="entry name" value="Cyt_P450_CS"/>
</dbReference>
<dbReference type="InterPro" id="IPR002401">
    <property type="entry name" value="Cyt_P450_E_grp-I"/>
</dbReference>
<dbReference type="InterPro" id="IPR036396">
    <property type="entry name" value="Cyt_P450_sf"/>
</dbReference>
<dbReference type="PANTHER" id="PTHR24279">
    <property type="entry name" value="CYTOCHROME P450"/>
    <property type="match status" value="1"/>
</dbReference>
<dbReference type="PANTHER" id="PTHR24279:SF120">
    <property type="entry name" value="CYTOCHROME P450"/>
    <property type="match status" value="1"/>
</dbReference>
<dbReference type="Pfam" id="PF00067">
    <property type="entry name" value="p450"/>
    <property type="match status" value="1"/>
</dbReference>
<dbReference type="PRINTS" id="PR00463">
    <property type="entry name" value="EP450I"/>
</dbReference>
<dbReference type="PRINTS" id="PR00385">
    <property type="entry name" value="P450"/>
</dbReference>
<dbReference type="SUPFAM" id="SSF48264">
    <property type="entry name" value="Cytochrome P450"/>
    <property type="match status" value="1"/>
</dbReference>
<dbReference type="PROSITE" id="PS00086">
    <property type="entry name" value="CYTOCHROME_P450"/>
    <property type="match status" value="1"/>
</dbReference>
<name>C49A1_DROME</name>